<accession>B4TB44</accession>
<protein>
    <recommendedName>
        <fullName evidence="1">Ribosomal RNA large subunit methyltransferase H</fullName>
        <ecNumber evidence="1">2.1.1.177</ecNumber>
    </recommendedName>
    <alternativeName>
        <fullName evidence="1">23S rRNA (pseudouridine1915-N3)-methyltransferase</fullName>
    </alternativeName>
    <alternativeName>
        <fullName evidence="1">23S rRNA m3Psi1915 methyltransferase</fullName>
    </alternativeName>
    <alternativeName>
        <fullName evidence="1">rRNA (pseudouridine-N3-)-methyltransferase RlmH</fullName>
    </alternativeName>
</protein>
<feature type="chain" id="PRO_0000366652" description="Ribosomal RNA large subunit methyltransferase H">
    <location>
        <begin position="1"/>
        <end position="155"/>
    </location>
</feature>
<feature type="binding site" evidence="1">
    <location>
        <position position="72"/>
    </location>
    <ligand>
        <name>S-adenosyl-L-methionine</name>
        <dbReference type="ChEBI" id="CHEBI:59789"/>
    </ligand>
</feature>
<feature type="binding site" evidence="1">
    <location>
        <position position="103"/>
    </location>
    <ligand>
        <name>S-adenosyl-L-methionine</name>
        <dbReference type="ChEBI" id="CHEBI:59789"/>
    </ligand>
</feature>
<feature type="binding site" evidence="1">
    <location>
        <begin position="122"/>
        <end position="127"/>
    </location>
    <ligand>
        <name>S-adenosyl-L-methionine</name>
        <dbReference type="ChEBI" id="CHEBI:59789"/>
    </ligand>
</feature>
<sequence length="155" mass="17399">MKLQLVAVGTKMPDWVQTGFTEYLRRFPKDMPFELIEIPAGKRGKNADIKRILDKEGEQMLAAAGKNRIVTLDIPGKPWDTPQLANELERWKQDGRDVSLLIGGPEGLSPACKAAAEQSWSLSALTLPHPLVRVLVAESLYRAWSITTNHPYHRE</sequence>
<keyword id="KW-0963">Cytoplasm</keyword>
<keyword id="KW-0489">Methyltransferase</keyword>
<keyword id="KW-0698">rRNA processing</keyword>
<keyword id="KW-0949">S-adenosyl-L-methionine</keyword>
<keyword id="KW-0808">Transferase</keyword>
<name>RLMH_SALHS</name>
<comment type="function">
    <text evidence="1">Specifically methylates the pseudouridine at position 1915 (m3Psi1915) in 23S rRNA.</text>
</comment>
<comment type="catalytic activity">
    <reaction evidence="1">
        <text>pseudouridine(1915) in 23S rRNA + S-adenosyl-L-methionine = N(3)-methylpseudouridine(1915) in 23S rRNA + S-adenosyl-L-homocysteine + H(+)</text>
        <dbReference type="Rhea" id="RHEA:42752"/>
        <dbReference type="Rhea" id="RHEA-COMP:10221"/>
        <dbReference type="Rhea" id="RHEA-COMP:10222"/>
        <dbReference type="ChEBI" id="CHEBI:15378"/>
        <dbReference type="ChEBI" id="CHEBI:57856"/>
        <dbReference type="ChEBI" id="CHEBI:59789"/>
        <dbReference type="ChEBI" id="CHEBI:65314"/>
        <dbReference type="ChEBI" id="CHEBI:74486"/>
        <dbReference type="EC" id="2.1.1.177"/>
    </reaction>
</comment>
<comment type="subunit">
    <text evidence="1">Homodimer.</text>
</comment>
<comment type="subcellular location">
    <subcellularLocation>
        <location evidence="1">Cytoplasm</location>
    </subcellularLocation>
</comment>
<comment type="similarity">
    <text evidence="1">Belongs to the RNA methyltransferase RlmH family.</text>
</comment>
<evidence type="ECO:0000255" key="1">
    <source>
        <dbReference type="HAMAP-Rule" id="MF_00658"/>
    </source>
</evidence>
<organism>
    <name type="scientific">Salmonella heidelberg (strain SL476)</name>
    <dbReference type="NCBI Taxonomy" id="454169"/>
    <lineage>
        <taxon>Bacteria</taxon>
        <taxon>Pseudomonadati</taxon>
        <taxon>Pseudomonadota</taxon>
        <taxon>Gammaproteobacteria</taxon>
        <taxon>Enterobacterales</taxon>
        <taxon>Enterobacteriaceae</taxon>
        <taxon>Salmonella</taxon>
    </lineage>
</organism>
<dbReference type="EC" id="2.1.1.177" evidence="1"/>
<dbReference type="EMBL" id="CP001120">
    <property type="protein sequence ID" value="ACF69905.1"/>
    <property type="molecule type" value="Genomic_DNA"/>
</dbReference>
<dbReference type="RefSeq" id="WP_000776107.1">
    <property type="nucleotide sequence ID" value="NC_011083.1"/>
</dbReference>
<dbReference type="SMR" id="B4TB44"/>
<dbReference type="GeneID" id="66755108"/>
<dbReference type="KEGG" id="seh:SeHA_C0757"/>
<dbReference type="HOGENOM" id="CLU_100552_1_0_6"/>
<dbReference type="Proteomes" id="UP000001866">
    <property type="component" value="Chromosome"/>
</dbReference>
<dbReference type="GO" id="GO:0005737">
    <property type="term" value="C:cytoplasm"/>
    <property type="evidence" value="ECO:0007669"/>
    <property type="project" value="UniProtKB-SubCell"/>
</dbReference>
<dbReference type="GO" id="GO:0070038">
    <property type="term" value="F:rRNA (pseudouridine-N3-)-methyltransferase activity"/>
    <property type="evidence" value="ECO:0007669"/>
    <property type="project" value="UniProtKB-UniRule"/>
</dbReference>
<dbReference type="CDD" id="cd18081">
    <property type="entry name" value="RlmH-like"/>
    <property type="match status" value="1"/>
</dbReference>
<dbReference type="FunFam" id="3.40.1280.10:FF:000004">
    <property type="entry name" value="Ribosomal RNA large subunit methyltransferase H"/>
    <property type="match status" value="1"/>
</dbReference>
<dbReference type="Gene3D" id="3.40.1280.10">
    <property type="match status" value="1"/>
</dbReference>
<dbReference type="HAMAP" id="MF_00658">
    <property type="entry name" value="23SrRNA_methyltr_H"/>
    <property type="match status" value="1"/>
</dbReference>
<dbReference type="InterPro" id="IPR029028">
    <property type="entry name" value="Alpha/beta_knot_MTases"/>
</dbReference>
<dbReference type="InterPro" id="IPR003742">
    <property type="entry name" value="RlmH-like"/>
</dbReference>
<dbReference type="InterPro" id="IPR029026">
    <property type="entry name" value="tRNA_m1G_MTases_N"/>
</dbReference>
<dbReference type="NCBIfam" id="NF000984">
    <property type="entry name" value="PRK00103.1-1"/>
    <property type="match status" value="1"/>
</dbReference>
<dbReference type="NCBIfam" id="NF000986">
    <property type="entry name" value="PRK00103.1-4"/>
    <property type="match status" value="1"/>
</dbReference>
<dbReference type="NCBIfam" id="TIGR00246">
    <property type="entry name" value="tRNA_RlmH_YbeA"/>
    <property type="match status" value="1"/>
</dbReference>
<dbReference type="PANTHER" id="PTHR33603">
    <property type="entry name" value="METHYLTRANSFERASE"/>
    <property type="match status" value="1"/>
</dbReference>
<dbReference type="PANTHER" id="PTHR33603:SF1">
    <property type="entry name" value="RIBOSOMAL RNA LARGE SUBUNIT METHYLTRANSFERASE H"/>
    <property type="match status" value="1"/>
</dbReference>
<dbReference type="Pfam" id="PF02590">
    <property type="entry name" value="SPOUT_MTase"/>
    <property type="match status" value="1"/>
</dbReference>
<dbReference type="PIRSF" id="PIRSF004505">
    <property type="entry name" value="MT_bac"/>
    <property type="match status" value="1"/>
</dbReference>
<dbReference type="SUPFAM" id="SSF75217">
    <property type="entry name" value="alpha/beta knot"/>
    <property type="match status" value="1"/>
</dbReference>
<gene>
    <name evidence="1" type="primary">rlmH</name>
    <name type="ordered locus">SeHA_C0757</name>
</gene>
<reference key="1">
    <citation type="journal article" date="2011" name="J. Bacteriol.">
        <title>Comparative genomics of 28 Salmonella enterica isolates: evidence for CRISPR-mediated adaptive sublineage evolution.</title>
        <authorList>
            <person name="Fricke W.F."/>
            <person name="Mammel M.K."/>
            <person name="McDermott P.F."/>
            <person name="Tartera C."/>
            <person name="White D.G."/>
            <person name="Leclerc J.E."/>
            <person name="Ravel J."/>
            <person name="Cebula T.A."/>
        </authorList>
    </citation>
    <scope>NUCLEOTIDE SEQUENCE [LARGE SCALE GENOMIC DNA]</scope>
    <source>
        <strain>SL476</strain>
    </source>
</reference>
<proteinExistence type="inferred from homology"/>